<protein>
    <recommendedName>
        <fullName evidence="1">Crossover junction endodeoxyribonuclease RuvC</fullName>
        <ecNumber evidence="1">3.1.21.10</ecNumber>
    </recommendedName>
    <alternativeName>
        <fullName evidence="1">Holliday junction nuclease RuvC</fullName>
    </alternativeName>
    <alternativeName>
        <fullName evidence="1">Holliday junction resolvase RuvC</fullName>
    </alternativeName>
</protein>
<gene>
    <name evidence="1" type="primary">ruvC</name>
    <name type="ordered locus">Hore_12330</name>
</gene>
<keyword id="KW-0963">Cytoplasm</keyword>
<keyword id="KW-0227">DNA damage</keyword>
<keyword id="KW-0233">DNA recombination</keyword>
<keyword id="KW-0234">DNA repair</keyword>
<keyword id="KW-0238">DNA-binding</keyword>
<keyword id="KW-0255">Endonuclease</keyword>
<keyword id="KW-0378">Hydrolase</keyword>
<keyword id="KW-0460">Magnesium</keyword>
<keyword id="KW-0479">Metal-binding</keyword>
<keyword id="KW-0540">Nuclease</keyword>
<keyword id="KW-1185">Reference proteome</keyword>
<sequence>MVILGVDPGLAIVGYALIEKQGNKYRVIDYGSINTPSKLESVDRLKIIHTDMVNIINKYNPDQMAVEKLFFNKNVKTAIEVGQARGVILLAGSQARLKIYEYTPLQVKQAVAGYGRAHKSQVQRMVKALLNLNEIPKPDDVADALAISICHGNSYRLNRKWGTKG</sequence>
<feature type="chain" id="PRO_1000195261" description="Crossover junction endodeoxyribonuclease RuvC">
    <location>
        <begin position="1"/>
        <end position="165"/>
    </location>
</feature>
<feature type="active site" evidence="1">
    <location>
        <position position="7"/>
    </location>
</feature>
<feature type="active site" evidence="1">
    <location>
        <position position="67"/>
    </location>
</feature>
<feature type="active site" evidence="1">
    <location>
        <position position="140"/>
    </location>
</feature>
<feature type="binding site" evidence="1">
    <location>
        <position position="7"/>
    </location>
    <ligand>
        <name>Mg(2+)</name>
        <dbReference type="ChEBI" id="CHEBI:18420"/>
        <label>1</label>
    </ligand>
</feature>
<feature type="binding site" evidence="1">
    <location>
        <position position="67"/>
    </location>
    <ligand>
        <name>Mg(2+)</name>
        <dbReference type="ChEBI" id="CHEBI:18420"/>
        <label>2</label>
    </ligand>
</feature>
<feature type="binding site" evidence="1">
    <location>
        <position position="140"/>
    </location>
    <ligand>
        <name>Mg(2+)</name>
        <dbReference type="ChEBI" id="CHEBI:18420"/>
        <label>1</label>
    </ligand>
</feature>
<proteinExistence type="inferred from homology"/>
<name>RUVC_HALOH</name>
<dbReference type="EC" id="3.1.21.10" evidence="1"/>
<dbReference type="EMBL" id="CP001098">
    <property type="protein sequence ID" value="ACL69983.1"/>
    <property type="molecule type" value="Genomic_DNA"/>
</dbReference>
<dbReference type="RefSeq" id="WP_012636167.1">
    <property type="nucleotide sequence ID" value="NC_011899.1"/>
</dbReference>
<dbReference type="SMR" id="B8CXG4"/>
<dbReference type="STRING" id="373903.Hore_12330"/>
<dbReference type="KEGG" id="hor:Hore_12330"/>
<dbReference type="eggNOG" id="COG0817">
    <property type="taxonomic scope" value="Bacteria"/>
</dbReference>
<dbReference type="HOGENOM" id="CLU_091257_3_1_9"/>
<dbReference type="OrthoDB" id="9805499at2"/>
<dbReference type="Proteomes" id="UP000000719">
    <property type="component" value="Chromosome"/>
</dbReference>
<dbReference type="GO" id="GO:0005737">
    <property type="term" value="C:cytoplasm"/>
    <property type="evidence" value="ECO:0007669"/>
    <property type="project" value="UniProtKB-SubCell"/>
</dbReference>
<dbReference type="GO" id="GO:0048476">
    <property type="term" value="C:Holliday junction resolvase complex"/>
    <property type="evidence" value="ECO:0007669"/>
    <property type="project" value="UniProtKB-UniRule"/>
</dbReference>
<dbReference type="GO" id="GO:0008821">
    <property type="term" value="F:crossover junction DNA endonuclease activity"/>
    <property type="evidence" value="ECO:0007669"/>
    <property type="project" value="UniProtKB-UniRule"/>
</dbReference>
<dbReference type="GO" id="GO:0003677">
    <property type="term" value="F:DNA binding"/>
    <property type="evidence" value="ECO:0007669"/>
    <property type="project" value="UniProtKB-KW"/>
</dbReference>
<dbReference type="GO" id="GO:0000287">
    <property type="term" value="F:magnesium ion binding"/>
    <property type="evidence" value="ECO:0007669"/>
    <property type="project" value="UniProtKB-UniRule"/>
</dbReference>
<dbReference type="GO" id="GO:0006310">
    <property type="term" value="P:DNA recombination"/>
    <property type="evidence" value="ECO:0007669"/>
    <property type="project" value="UniProtKB-UniRule"/>
</dbReference>
<dbReference type="GO" id="GO:0006281">
    <property type="term" value="P:DNA repair"/>
    <property type="evidence" value="ECO:0007669"/>
    <property type="project" value="UniProtKB-UniRule"/>
</dbReference>
<dbReference type="CDD" id="cd16962">
    <property type="entry name" value="RuvC"/>
    <property type="match status" value="1"/>
</dbReference>
<dbReference type="FunFam" id="3.30.420.10:FF:000002">
    <property type="entry name" value="Crossover junction endodeoxyribonuclease RuvC"/>
    <property type="match status" value="1"/>
</dbReference>
<dbReference type="Gene3D" id="3.30.420.10">
    <property type="entry name" value="Ribonuclease H-like superfamily/Ribonuclease H"/>
    <property type="match status" value="1"/>
</dbReference>
<dbReference type="HAMAP" id="MF_00034">
    <property type="entry name" value="RuvC"/>
    <property type="match status" value="1"/>
</dbReference>
<dbReference type="InterPro" id="IPR012337">
    <property type="entry name" value="RNaseH-like_sf"/>
</dbReference>
<dbReference type="InterPro" id="IPR036397">
    <property type="entry name" value="RNaseH_sf"/>
</dbReference>
<dbReference type="InterPro" id="IPR020563">
    <property type="entry name" value="X-over_junc_endoDNase_Mg_BS"/>
</dbReference>
<dbReference type="InterPro" id="IPR002176">
    <property type="entry name" value="X-over_junc_endoDNase_RuvC"/>
</dbReference>
<dbReference type="NCBIfam" id="NF000711">
    <property type="entry name" value="PRK00039.2-1"/>
    <property type="match status" value="1"/>
</dbReference>
<dbReference type="NCBIfam" id="TIGR00228">
    <property type="entry name" value="ruvC"/>
    <property type="match status" value="1"/>
</dbReference>
<dbReference type="PANTHER" id="PTHR30194">
    <property type="entry name" value="CROSSOVER JUNCTION ENDODEOXYRIBONUCLEASE RUVC"/>
    <property type="match status" value="1"/>
</dbReference>
<dbReference type="PANTHER" id="PTHR30194:SF3">
    <property type="entry name" value="CROSSOVER JUNCTION ENDODEOXYRIBONUCLEASE RUVC"/>
    <property type="match status" value="1"/>
</dbReference>
<dbReference type="Pfam" id="PF02075">
    <property type="entry name" value="RuvC"/>
    <property type="match status" value="1"/>
</dbReference>
<dbReference type="PRINTS" id="PR00696">
    <property type="entry name" value="RSOLVASERUVC"/>
</dbReference>
<dbReference type="SUPFAM" id="SSF53098">
    <property type="entry name" value="Ribonuclease H-like"/>
    <property type="match status" value="1"/>
</dbReference>
<dbReference type="PROSITE" id="PS01321">
    <property type="entry name" value="RUVC"/>
    <property type="match status" value="1"/>
</dbReference>
<accession>B8CXG4</accession>
<evidence type="ECO:0000255" key="1">
    <source>
        <dbReference type="HAMAP-Rule" id="MF_00034"/>
    </source>
</evidence>
<comment type="function">
    <text evidence="1">The RuvA-RuvB-RuvC complex processes Holliday junction (HJ) DNA during genetic recombination and DNA repair. Endonuclease that resolves HJ intermediates. Cleaves cruciform DNA by making single-stranded nicks across the HJ at symmetrical positions within the homologous arms, yielding a 5'-phosphate and a 3'-hydroxyl group; requires a central core of homology in the junction. The consensus cleavage sequence is 5'-(A/T)TT(C/G)-3'. Cleavage occurs on the 3'-side of the TT dinucleotide at the point of strand exchange. HJ branch migration catalyzed by RuvA-RuvB allows RuvC to scan DNA until it finds its consensus sequence, where it cleaves and resolves the cruciform DNA.</text>
</comment>
<comment type="catalytic activity">
    <reaction evidence="1">
        <text>Endonucleolytic cleavage at a junction such as a reciprocal single-stranded crossover between two homologous DNA duplexes (Holliday junction).</text>
        <dbReference type="EC" id="3.1.21.10"/>
    </reaction>
</comment>
<comment type="cofactor">
    <cofactor evidence="1">
        <name>Mg(2+)</name>
        <dbReference type="ChEBI" id="CHEBI:18420"/>
    </cofactor>
    <text evidence="1">Binds 2 Mg(2+) ion per subunit.</text>
</comment>
<comment type="subunit">
    <text evidence="1">Homodimer which binds Holliday junction (HJ) DNA. The HJ becomes 2-fold symmetrical on binding to RuvC with unstacked arms; it has a different conformation from HJ DNA in complex with RuvA. In the full resolvosome a probable DNA-RuvA(4)-RuvB(12)-RuvC(2) complex forms which resolves the HJ.</text>
</comment>
<comment type="subcellular location">
    <subcellularLocation>
        <location evidence="1">Cytoplasm</location>
    </subcellularLocation>
</comment>
<comment type="similarity">
    <text evidence="1">Belongs to the RuvC family.</text>
</comment>
<organism>
    <name type="scientific">Halothermothrix orenii (strain H 168 / OCM 544 / DSM 9562)</name>
    <dbReference type="NCBI Taxonomy" id="373903"/>
    <lineage>
        <taxon>Bacteria</taxon>
        <taxon>Bacillati</taxon>
        <taxon>Bacillota</taxon>
        <taxon>Clostridia</taxon>
        <taxon>Halanaerobiales</taxon>
        <taxon>Halothermotrichaceae</taxon>
        <taxon>Halothermothrix</taxon>
    </lineage>
</organism>
<reference key="1">
    <citation type="journal article" date="2009" name="PLoS ONE">
        <title>Genome analysis of the anaerobic thermohalophilic bacterium Halothermothrix orenii.</title>
        <authorList>
            <person name="Mavromatis K."/>
            <person name="Ivanova N."/>
            <person name="Anderson I."/>
            <person name="Lykidis A."/>
            <person name="Hooper S.D."/>
            <person name="Sun H."/>
            <person name="Kunin V."/>
            <person name="Lapidus A."/>
            <person name="Hugenholtz P."/>
            <person name="Patel B."/>
            <person name="Kyrpides N.C."/>
        </authorList>
    </citation>
    <scope>NUCLEOTIDE SEQUENCE [LARGE SCALE GENOMIC DNA]</scope>
    <source>
        <strain>H 168 / OCM 544 / DSM 9562</strain>
    </source>
</reference>